<proteinExistence type="inferred from homology"/>
<protein>
    <recommendedName>
        <fullName evidence="1">ATP-dependent protease ATPase subunit HslU</fullName>
    </recommendedName>
    <alternativeName>
        <fullName evidence="1">Unfoldase HslU</fullName>
    </alternativeName>
</protein>
<organism>
    <name type="scientific">Acidithiobacillus ferrooxidans (strain ATCC 23270 / DSM 14882 / CIP 104768 / NCIMB 8455)</name>
    <name type="common">Ferrobacillus ferrooxidans (strain ATCC 23270)</name>
    <dbReference type="NCBI Taxonomy" id="243159"/>
    <lineage>
        <taxon>Bacteria</taxon>
        <taxon>Pseudomonadati</taxon>
        <taxon>Pseudomonadota</taxon>
        <taxon>Acidithiobacillia</taxon>
        <taxon>Acidithiobacillales</taxon>
        <taxon>Acidithiobacillaceae</taxon>
        <taxon>Acidithiobacillus</taxon>
    </lineage>
</organism>
<name>HSLU_ACIF2</name>
<comment type="function">
    <text evidence="1">ATPase subunit of a proteasome-like degradation complex; this subunit has chaperone activity. The binding of ATP and its subsequent hydrolysis by HslU are essential for unfolding of protein substrates subsequently hydrolyzed by HslV. HslU recognizes the N-terminal part of its protein substrates and unfolds these before they are guided to HslV for hydrolysis.</text>
</comment>
<comment type="subunit">
    <text evidence="1">A double ring-shaped homohexamer of HslV is capped on each side by a ring-shaped HslU homohexamer. The assembly of the HslU/HslV complex is dependent on binding of ATP.</text>
</comment>
<comment type="subcellular location">
    <subcellularLocation>
        <location evidence="1">Cytoplasm</location>
    </subcellularLocation>
</comment>
<comment type="similarity">
    <text evidence="1">Belongs to the ClpX chaperone family. HslU subfamily.</text>
</comment>
<dbReference type="EMBL" id="CP001219">
    <property type="protein sequence ID" value="ACK79019.1"/>
    <property type="molecule type" value="Genomic_DNA"/>
</dbReference>
<dbReference type="RefSeq" id="WP_012537366.1">
    <property type="nucleotide sequence ID" value="NC_011761.1"/>
</dbReference>
<dbReference type="SMR" id="B7J8H7"/>
<dbReference type="STRING" id="243159.AFE_2748"/>
<dbReference type="PaxDb" id="243159-AFE_2748"/>
<dbReference type="GeneID" id="65281786"/>
<dbReference type="KEGG" id="afr:AFE_2748"/>
<dbReference type="eggNOG" id="COG1220">
    <property type="taxonomic scope" value="Bacteria"/>
</dbReference>
<dbReference type="HOGENOM" id="CLU_033123_0_0_6"/>
<dbReference type="Proteomes" id="UP000001362">
    <property type="component" value="Chromosome"/>
</dbReference>
<dbReference type="GO" id="GO:0009376">
    <property type="term" value="C:HslUV protease complex"/>
    <property type="evidence" value="ECO:0007669"/>
    <property type="project" value="UniProtKB-UniRule"/>
</dbReference>
<dbReference type="GO" id="GO:0005524">
    <property type="term" value="F:ATP binding"/>
    <property type="evidence" value="ECO:0007669"/>
    <property type="project" value="UniProtKB-UniRule"/>
</dbReference>
<dbReference type="GO" id="GO:0016887">
    <property type="term" value="F:ATP hydrolysis activity"/>
    <property type="evidence" value="ECO:0007669"/>
    <property type="project" value="InterPro"/>
</dbReference>
<dbReference type="GO" id="GO:0008233">
    <property type="term" value="F:peptidase activity"/>
    <property type="evidence" value="ECO:0007669"/>
    <property type="project" value="InterPro"/>
</dbReference>
<dbReference type="GO" id="GO:0036402">
    <property type="term" value="F:proteasome-activating activity"/>
    <property type="evidence" value="ECO:0007669"/>
    <property type="project" value="UniProtKB-UniRule"/>
</dbReference>
<dbReference type="GO" id="GO:0043335">
    <property type="term" value="P:protein unfolding"/>
    <property type="evidence" value="ECO:0007669"/>
    <property type="project" value="UniProtKB-UniRule"/>
</dbReference>
<dbReference type="GO" id="GO:0051603">
    <property type="term" value="P:proteolysis involved in protein catabolic process"/>
    <property type="evidence" value="ECO:0007669"/>
    <property type="project" value="TreeGrafter"/>
</dbReference>
<dbReference type="CDD" id="cd19498">
    <property type="entry name" value="RecA-like_HslU"/>
    <property type="match status" value="1"/>
</dbReference>
<dbReference type="FunFam" id="3.40.50.300:FF:000213">
    <property type="entry name" value="ATP-dependent protease ATPase subunit HslU"/>
    <property type="match status" value="1"/>
</dbReference>
<dbReference type="FunFam" id="3.40.50.300:FF:000220">
    <property type="entry name" value="ATP-dependent protease ATPase subunit HslU"/>
    <property type="match status" value="1"/>
</dbReference>
<dbReference type="Gene3D" id="1.10.8.60">
    <property type="match status" value="1"/>
</dbReference>
<dbReference type="Gene3D" id="1.10.8.10">
    <property type="entry name" value="DNA helicase RuvA subunit, C-terminal domain"/>
    <property type="match status" value="2"/>
</dbReference>
<dbReference type="Gene3D" id="3.40.50.300">
    <property type="entry name" value="P-loop containing nucleotide triphosphate hydrolases"/>
    <property type="match status" value="1"/>
</dbReference>
<dbReference type="HAMAP" id="MF_00249">
    <property type="entry name" value="HslU"/>
    <property type="match status" value="1"/>
</dbReference>
<dbReference type="InterPro" id="IPR003593">
    <property type="entry name" value="AAA+_ATPase"/>
</dbReference>
<dbReference type="InterPro" id="IPR050052">
    <property type="entry name" value="ATP-dep_Clp_protease_ClpX"/>
</dbReference>
<dbReference type="InterPro" id="IPR003959">
    <property type="entry name" value="ATPase_AAA_core"/>
</dbReference>
<dbReference type="InterPro" id="IPR019489">
    <property type="entry name" value="Clp_ATPase_C"/>
</dbReference>
<dbReference type="InterPro" id="IPR004491">
    <property type="entry name" value="HslU"/>
</dbReference>
<dbReference type="InterPro" id="IPR027417">
    <property type="entry name" value="P-loop_NTPase"/>
</dbReference>
<dbReference type="NCBIfam" id="TIGR00390">
    <property type="entry name" value="hslU"/>
    <property type="match status" value="1"/>
</dbReference>
<dbReference type="NCBIfam" id="NF003544">
    <property type="entry name" value="PRK05201.1"/>
    <property type="match status" value="1"/>
</dbReference>
<dbReference type="PANTHER" id="PTHR48102">
    <property type="entry name" value="ATP-DEPENDENT CLP PROTEASE ATP-BINDING SUBUNIT CLPX-LIKE, MITOCHONDRIAL-RELATED"/>
    <property type="match status" value="1"/>
</dbReference>
<dbReference type="PANTHER" id="PTHR48102:SF3">
    <property type="entry name" value="ATP-DEPENDENT PROTEASE ATPASE SUBUNIT HSLU"/>
    <property type="match status" value="1"/>
</dbReference>
<dbReference type="Pfam" id="PF00004">
    <property type="entry name" value="AAA"/>
    <property type="match status" value="1"/>
</dbReference>
<dbReference type="Pfam" id="PF07724">
    <property type="entry name" value="AAA_2"/>
    <property type="match status" value="1"/>
</dbReference>
<dbReference type="SMART" id="SM00382">
    <property type="entry name" value="AAA"/>
    <property type="match status" value="1"/>
</dbReference>
<dbReference type="SMART" id="SM01086">
    <property type="entry name" value="ClpB_D2-small"/>
    <property type="match status" value="1"/>
</dbReference>
<dbReference type="SUPFAM" id="SSF52540">
    <property type="entry name" value="P-loop containing nucleoside triphosphate hydrolases"/>
    <property type="match status" value="1"/>
</dbReference>
<evidence type="ECO:0000255" key="1">
    <source>
        <dbReference type="HAMAP-Rule" id="MF_00249"/>
    </source>
</evidence>
<accession>B7J8H7</accession>
<gene>
    <name evidence="1" type="primary">hslU</name>
    <name type="ordered locus">AFE_2748</name>
</gene>
<reference key="1">
    <citation type="journal article" date="2008" name="BMC Genomics">
        <title>Acidithiobacillus ferrooxidans metabolism: from genome sequence to industrial applications.</title>
        <authorList>
            <person name="Valdes J."/>
            <person name="Pedroso I."/>
            <person name="Quatrini R."/>
            <person name="Dodson R.J."/>
            <person name="Tettelin H."/>
            <person name="Blake R. II"/>
            <person name="Eisen J.A."/>
            <person name="Holmes D.S."/>
        </authorList>
    </citation>
    <scope>NUCLEOTIDE SEQUENCE [LARGE SCALE GENOMIC DNA]</scope>
    <source>
        <strain>ATCC 23270 / DSM 14882 / CIP 104768 / NCIMB 8455</strain>
    </source>
</reference>
<keyword id="KW-0067">ATP-binding</keyword>
<keyword id="KW-0143">Chaperone</keyword>
<keyword id="KW-0963">Cytoplasm</keyword>
<keyword id="KW-0547">Nucleotide-binding</keyword>
<keyword id="KW-1185">Reference proteome</keyword>
<keyword id="KW-0346">Stress response</keyword>
<sequence>MSEMTPREIVQELDKYIIGQSEAKRAVAIALRNRWRRGQVPPPLHQEITPKNILMIGPTGVGKTEIARRLAQLANAPFIKVEATKFTEVGYVGKDVESIIRDLTETAVDMIRNERQVALRQRAEELAEERILDILIPGPRDSSVPRSDEGTRQKFRKMLREGKLDAQEIEIEVSAPKGGVEIMAPAGMEEMTNQLREMFSNMAPGKTSTRRVTVSEAQRLLTDDEAAKLVNEEEVRALALERVQSGGIVFIDEIDKVAVRSGTQQGSDVSREGVQRDLLPLVEGSNVSTRYGVVKTDHILFIASGAFHLSKPSDLIPELQGRLPIRVELEALSAADLVRILQEPENALVRQYGALLASDGLALHFTQDGVQRIAEIAQQVNERVENIGARRLHTVMERLLEEVAFVAPDGSTTALEVDAAYVDSRLKDLAQDEDLSRYIL</sequence>
<feature type="chain" id="PRO_1000189689" description="ATP-dependent protease ATPase subunit HslU">
    <location>
        <begin position="1"/>
        <end position="440"/>
    </location>
</feature>
<feature type="binding site" evidence="1">
    <location>
        <position position="18"/>
    </location>
    <ligand>
        <name>ATP</name>
        <dbReference type="ChEBI" id="CHEBI:30616"/>
    </ligand>
</feature>
<feature type="binding site" evidence="1">
    <location>
        <begin position="60"/>
        <end position="65"/>
    </location>
    <ligand>
        <name>ATP</name>
        <dbReference type="ChEBI" id="CHEBI:30616"/>
    </ligand>
</feature>
<feature type="binding site" evidence="1">
    <location>
        <position position="252"/>
    </location>
    <ligand>
        <name>ATP</name>
        <dbReference type="ChEBI" id="CHEBI:30616"/>
    </ligand>
</feature>
<feature type="binding site" evidence="1">
    <location>
        <position position="318"/>
    </location>
    <ligand>
        <name>ATP</name>
        <dbReference type="ChEBI" id="CHEBI:30616"/>
    </ligand>
</feature>
<feature type="binding site" evidence="1">
    <location>
        <position position="390"/>
    </location>
    <ligand>
        <name>ATP</name>
        <dbReference type="ChEBI" id="CHEBI:30616"/>
    </ligand>
</feature>